<organism>
    <name type="scientific">Geobacillus kaustophilus (strain HTA426)</name>
    <dbReference type="NCBI Taxonomy" id="235909"/>
    <lineage>
        <taxon>Bacteria</taxon>
        <taxon>Bacillati</taxon>
        <taxon>Bacillota</taxon>
        <taxon>Bacilli</taxon>
        <taxon>Bacillales</taxon>
        <taxon>Anoxybacillaceae</taxon>
        <taxon>Geobacillus</taxon>
        <taxon>Geobacillus thermoleovorans group</taxon>
    </lineage>
</organism>
<sequence length="484" mass="53035">MTTGVQTLKNYIGGQWVESRSGKTEAVPNPATGEVLAYVPISSREELDEAVRAAKEAFKTWRKTPVPRRARILFKYQQLLVEHWEELARLVTLENGKSYNEAYGEVQRGIECVEFAAGAPTLMMGRQLPDIATGIESGMYRYPIGVVGGITPFNFPMMVPCWMFPLAIACGNTFVLKPSERTPMLANRLAELFKEAGLPDGVLNIVHGAHDVVNGLLEHPDVKAISFVGSQPVGEYVYKTAAAHGKRVQALTGAKNHSIVMPDADLNVAVREIINAAFGSAGERCMAASVVVAVGEIADELVEKLVAAANELKIGNGLEESVFLGPVIREAHKQRTVKYIELGEKEGAILVRDGRKDAAVQDNGYFIGPTIFDRVTTDMTIWKDEIFAPVLSIVRVETLDEAIEVANKSPFANGACIYTRDGGNVRKFREEIDAGMLGVNLGVPAPMAFFPFSGWKNSFYGDLHANGMDGVEFYTRKKMMTSRW</sequence>
<dbReference type="EC" id="1.2.1.27" evidence="1"/>
<dbReference type="EMBL" id="BA000043">
    <property type="protein sequence ID" value="BAD76172.1"/>
    <property type="status" value="ALT_INIT"/>
    <property type="molecule type" value="Genomic_DNA"/>
</dbReference>
<dbReference type="SMR" id="Q5KYR4"/>
<dbReference type="STRING" id="235909.GK1887"/>
<dbReference type="KEGG" id="gka:GK1887"/>
<dbReference type="eggNOG" id="COG1012">
    <property type="taxonomic scope" value="Bacteria"/>
</dbReference>
<dbReference type="HOGENOM" id="CLU_005391_1_0_9"/>
<dbReference type="UniPathway" id="UPA00076">
    <property type="reaction ID" value="UER00148"/>
</dbReference>
<dbReference type="Proteomes" id="UP000001172">
    <property type="component" value="Chromosome"/>
</dbReference>
<dbReference type="GO" id="GO:0018478">
    <property type="term" value="F:malonate-semialdehyde dehydrogenase (acetylating) activity"/>
    <property type="evidence" value="ECO:0007669"/>
    <property type="project" value="UniProtKB-UniRule"/>
</dbReference>
<dbReference type="GO" id="GO:0004491">
    <property type="term" value="F:methylmalonate-semialdehyde dehydrogenase (acylating, NAD) activity"/>
    <property type="evidence" value="ECO:0007669"/>
    <property type="project" value="UniProtKB-UniRule"/>
</dbReference>
<dbReference type="GO" id="GO:0019310">
    <property type="term" value="P:inositol catabolic process"/>
    <property type="evidence" value="ECO:0007669"/>
    <property type="project" value="UniProtKB-UniRule"/>
</dbReference>
<dbReference type="GO" id="GO:0006210">
    <property type="term" value="P:thymine catabolic process"/>
    <property type="evidence" value="ECO:0007669"/>
    <property type="project" value="TreeGrafter"/>
</dbReference>
<dbReference type="GO" id="GO:0006574">
    <property type="term" value="P:valine catabolic process"/>
    <property type="evidence" value="ECO:0007669"/>
    <property type="project" value="TreeGrafter"/>
</dbReference>
<dbReference type="CDD" id="cd07085">
    <property type="entry name" value="ALDH_F6_MMSDH"/>
    <property type="match status" value="1"/>
</dbReference>
<dbReference type="FunFam" id="3.40.309.10:FF:000002">
    <property type="entry name" value="Methylmalonate-semialdehyde dehydrogenase (Acylating)"/>
    <property type="match status" value="1"/>
</dbReference>
<dbReference type="FunFam" id="3.40.605.10:FF:000003">
    <property type="entry name" value="Methylmalonate-semialdehyde dehydrogenase [acylating]"/>
    <property type="match status" value="1"/>
</dbReference>
<dbReference type="Gene3D" id="3.40.605.10">
    <property type="entry name" value="Aldehyde Dehydrogenase, Chain A, domain 1"/>
    <property type="match status" value="1"/>
</dbReference>
<dbReference type="Gene3D" id="3.40.309.10">
    <property type="entry name" value="Aldehyde Dehydrogenase, Chain A, domain 2"/>
    <property type="match status" value="1"/>
</dbReference>
<dbReference type="HAMAP" id="MF_01670">
    <property type="entry name" value="IolA"/>
    <property type="match status" value="1"/>
</dbReference>
<dbReference type="InterPro" id="IPR016161">
    <property type="entry name" value="Ald_DH/histidinol_DH"/>
</dbReference>
<dbReference type="InterPro" id="IPR016163">
    <property type="entry name" value="Ald_DH_C"/>
</dbReference>
<dbReference type="InterPro" id="IPR016160">
    <property type="entry name" value="Ald_DH_CS_CYS"/>
</dbReference>
<dbReference type="InterPro" id="IPR016162">
    <property type="entry name" value="Ald_DH_N"/>
</dbReference>
<dbReference type="InterPro" id="IPR015590">
    <property type="entry name" value="Aldehyde_DH_dom"/>
</dbReference>
<dbReference type="InterPro" id="IPR010061">
    <property type="entry name" value="MeMal-semiAld_DH"/>
</dbReference>
<dbReference type="InterPro" id="IPR023510">
    <property type="entry name" value="MSDH_GmP_bac"/>
</dbReference>
<dbReference type="NCBIfam" id="TIGR01722">
    <property type="entry name" value="MMSDH"/>
    <property type="match status" value="1"/>
</dbReference>
<dbReference type="PANTHER" id="PTHR43866">
    <property type="entry name" value="MALONATE-SEMIALDEHYDE DEHYDROGENASE"/>
    <property type="match status" value="1"/>
</dbReference>
<dbReference type="PANTHER" id="PTHR43866:SF4">
    <property type="entry name" value="MALONATE-SEMIALDEHYDE DEHYDROGENASE"/>
    <property type="match status" value="1"/>
</dbReference>
<dbReference type="Pfam" id="PF00171">
    <property type="entry name" value="Aldedh"/>
    <property type="match status" value="1"/>
</dbReference>
<dbReference type="SUPFAM" id="SSF53720">
    <property type="entry name" value="ALDH-like"/>
    <property type="match status" value="1"/>
</dbReference>
<dbReference type="PROSITE" id="PS00070">
    <property type="entry name" value="ALDEHYDE_DEHYDR_CYS"/>
    <property type="match status" value="1"/>
</dbReference>
<accession>Q5KYR4</accession>
<evidence type="ECO:0000255" key="1">
    <source>
        <dbReference type="HAMAP-Rule" id="MF_01670"/>
    </source>
</evidence>
<evidence type="ECO:0000305" key="2"/>
<protein>
    <recommendedName>
        <fullName evidence="1">Malonate-semialdehyde dehydrogenase 2</fullName>
        <shortName evidence="1">MSA dehydrogenase 2</shortName>
        <ecNumber evidence="1">1.2.1.27</ecNumber>
    </recommendedName>
    <alternativeName>
        <fullName evidence="1">Methylmalonate-semialdehyde dehydrogenase 2</fullName>
        <shortName evidence="1">MMSA dehydrogenase 2</shortName>
        <shortName evidence="1">MSDH 2</shortName>
    </alternativeName>
</protein>
<proteinExistence type="inferred from homology"/>
<reference key="1">
    <citation type="journal article" date="2004" name="Nucleic Acids Res.">
        <title>Thermoadaptation trait revealed by the genome sequence of thermophilic Geobacillus kaustophilus.</title>
        <authorList>
            <person name="Takami H."/>
            <person name="Takaki Y."/>
            <person name="Chee G.-J."/>
            <person name="Nishi S."/>
            <person name="Shimamura S."/>
            <person name="Suzuki H."/>
            <person name="Matsui S."/>
            <person name="Uchiyama I."/>
        </authorList>
    </citation>
    <scope>NUCLEOTIDE SEQUENCE [LARGE SCALE GENOMIC DNA]</scope>
    <source>
        <strain>HTA426</strain>
    </source>
</reference>
<name>IOLA2_GEOKA</name>
<comment type="function">
    <text evidence="1">Catalyzes the oxidation of malonate semialdehyde (MSA) and methylmalonate semialdehyde (MMSA) into acetyl-CoA and propanoyl-CoA, respectively. Is involved in a myo-inositol catabolic pathway. Bicarbonate, and not CO2, is the end-product of the enzymatic reaction.</text>
</comment>
<comment type="catalytic activity">
    <reaction evidence="1">
        <text>3-oxopropanoate + NAD(+) + CoA + H2O = hydrogencarbonate + acetyl-CoA + NADH + H(+)</text>
        <dbReference type="Rhea" id="RHEA:76615"/>
        <dbReference type="ChEBI" id="CHEBI:15377"/>
        <dbReference type="ChEBI" id="CHEBI:15378"/>
        <dbReference type="ChEBI" id="CHEBI:17544"/>
        <dbReference type="ChEBI" id="CHEBI:33190"/>
        <dbReference type="ChEBI" id="CHEBI:57287"/>
        <dbReference type="ChEBI" id="CHEBI:57288"/>
        <dbReference type="ChEBI" id="CHEBI:57540"/>
        <dbReference type="ChEBI" id="CHEBI:57945"/>
        <dbReference type="EC" id="1.2.1.27"/>
    </reaction>
    <physiologicalReaction direction="left-to-right" evidence="1">
        <dbReference type="Rhea" id="RHEA:76616"/>
    </physiologicalReaction>
</comment>
<comment type="catalytic activity">
    <reaction evidence="1">
        <text>2-methyl-3-oxopropanoate + NAD(+) + CoA + H2O = propanoyl-CoA + hydrogencarbonate + NADH + H(+)</text>
        <dbReference type="Rhea" id="RHEA:20804"/>
        <dbReference type="ChEBI" id="CHEBI:15377"/>
        <dbReference type="ChEBI" id="CHEBI:15378"/>
        <dbReference type="ChEBI" id="CHEBI:17544"/>
        <dbReference type="ChEBI" id="CHEBI:57287"/>
        <dbReference type="ChEBI" id="CHEBI:57392"/>
        <dbReference type="ChEBI" id="CHEBI:57540"/>
        <dbReference type="ChEBI" id="CHEBI:57700"/>
        <dbReference type="ChEBI" id="CHEBI:57945"/>
        <dbReference type="EC" id="1.2.1.27"/>
    </reaction>
    <physiologicalReaction direction="left-to-right" evidence="1">
        <dbReference type="Rhea" id="RHEA:20805"/>
    </physiologicalReaction>
</comment>
<comment type="pathway">
    <text evidence="1">Polyol metabolism; myo-inositol degradation into acetyl-CoA; acetyl-CoA from myo-inositol: step 7/7.</text>
</comment>
<comment type="subunit">
    <text evidence="1">Homotetramer.</text>
</comment>
<comment type="similarity">
    <text evidence="1">Belongs to the aldehyde dehydrogenase family. IolA subfamily.</text>
</comment>
<comment type="sequence caution" evidence="2">
    <conflict type="erroneous initiation">
        <sequence resource="EMBL-CDS" id="BAD76172"/>
    </conflict>
</comment>
<keyword id="KW-0520">NAD</keyword>
<keyword id="KW-0560">Oxidoreductase</keyword>
<keyword id="KW-1185">Reference proteome</keyword>
<feature type="chain" id="PRO_0000352340" description="Malonate-semialdehyde dehydrogenase 2">
    <location>
        <begin position="1"/>
        <end position="484"/>
    </location>
</feature>
<feature type="active site" description="Nucleophile" evidence="1">
    <location>
        <position position="285"/>
    </location>
</feature>
<feature type="binding site" evidence="1">
    <location>
        <position position="153"/>
    </location>
    <ligand>
        <name>NAD(+)</name>
        <dbReference type="ChEBI" id="CHEBI:57540"/>
    </ligand>
</feature>
<feature type="binding site" evidence="1">
    <location>
        <position position="177"/>
    </location>
    <ligand>
        <name>NAD(+)</name>
        <dbReference type="ChEBI" id="CHEBI:57540"/>
    </ligand>
</feature>
<feature type="binding site" evidence="1">
    <location>
        <position position="180"/>
    </location>
    <ligand>
        <name>NAD(+)</name>
        <dbReference type="ChEBI" id="CHEBI:57540"/>
    </ligand>
</feature>
<feature type="binding site" evidence="1">
    <location>
        <position position="181"/>
    </location>
    <ligand>
        <name>NAD(+)</name>
        <dbReference type="ChEBI" id="CHEBI:57540"/>
    </ligand>
</feature>
<feature type="binding site" evidence="1">
    <location>
        <position position="230"/>
    </location>
    <ligand>
        <name>NAD(+)</name>
        <dbReference type="ChEBI" id="CHEBI:57540"/>
    </ligand>
</feature>
<feature type="binding site" evidence="1">
    <location>
        <position position="252"/>
    </location>
    <ligand>
        <name>NAD(+)</name>
        <dbReference type="ChEBI" id="CHEBI:57540"/>
    </ligand>
</feature>
<feature type="binding site" evidence="1">
    <location>
        <position position="385"/>
    </location>
    <ligand>
        <name>NAD(+)</name>
        <dbReference type="ChEBI" id="CHEBI:57540"/>
    </ligand>
</feature>
<gene>
    <name evidence="1" type="primary">iolA2</name>
    <name type="ordered locus">GK1887</name>
</gene>